<feature type="chain" id="PRO_0000185006" description="5-oxoprolinase subunit A">
    <location>
        <begin position="1"/>
        <end position="258"/>
    </location>
</feature>
<organism>
    <name type="scientific">Deinococcus radiodurans (strain ATCC 13939 / DSM 20539 / JCM 16871 / CCUG 27074 / LMG 4051 / NBRC 15346 / NCIMB 9279 / VKM B-1422 / R1)</name>
    <dbReference type="NCBI Taxonomy" id="243230"/>
    <lineage>
        <taxon>Bacteria</taxon>
        <taxon>Thermotogati</taxon>
        <taxon>Deinococcota</taxon>
        <taxon>Deinococci</taxon>
        <taxon>Deinococcales</taxon>
        <taxon>Deinococcaceae</taxon>
        <taxon>Deinococcus</taxon>
    </lineage>
</organism>
<name>PXPA_DEIRA</name>
<reference key="1">
    <citation type="journal article" date="1999" name="Science">
        <title>Genome sequence of the radioresistant bacterium Deinococcus radiodurans R1.</title>
        <authorList>
            <person name="White O."/>
            <person name="Eisen J.A."/>
            <person name="Heidelberg J.F."/>
            <person name="Hickey E.K."/>
            <person name="Peterson J.D."/>
            <person name="Dodson R.J."/>
            <person name="Haft D.H."/>
            <person name="Gwinn M.L."/>
            <person name="Nelson W.C."/>
            <person name="Richardson D.L."/>
            <person name="Moffat K.S."/>
            <person name="Qin H."/>
            <person name="Jiang L."/>
            <person name="Pamphile W."/>
            <person name="Crosby M."/>
            <person name="Shen M."/>
            <person name="Vamathevan J.J."/>
            <person name="Lam P."/>
            <person name="McDonald L.A."/>
            <person name="Utterback T.R."/>
            <person name="Zalewski C."/>
            <person name="Makarova K.S."/>
            <person name="Aravind L."/>
            <person name="Daly M.J."/>
            <person name="Minton K.W."/>
            <person name="Fleischmann R.D."/>
            <person name="Ketchum K.A."/>
            <person name="Nelson K.E."/>
            <person name="Salzberg S.L."/>
            <person name="Smith H.O."/>
            <person name="Venter J.C."/>
            <person name="Fraser C.M."/>
        </authorList>
    </citation>
    <scope>NUCLEOTIDE SEQUENCE [LARGE SCALE GENOMIC DNA]</scope>
    <source>
        <strain>ATCC 13939 / DSM 20539 / JCM 16871 / CCUG 27074 / LMG 4051 / NBRC 15346 / NCIMB 9279 / VKM B-1422 / R1</strain>
    </source>
</reference>
<evidence type="ECO:0000255" key="1">
    <source>
        <dbReference type="HAMAP-Rule" id="MF_00691"/>
    </source>
</evidence>
<evidence type="ECO:0000305" key="2"/>
<dbReference type="EC" id="3.5.2.9" evidence="1"/>
<dbReference type="EMBL" id="AE001825">
    <property type="protein sequence ID" value="AAF12478.1"/>
    <property type="status" value="ALT_INIT"/>
    <property type="molecule type" value="Genomic_DNA"/>
</dbReference>
<dbReference type="PIR" id="B75582">
    <property type="entry name" value="B75582"/>
</dbReference>
<dbReference type="RefSeq" id="NP_285607.1">
    <property type="nucleotide sequence ID" value="NC_001264.1"/>
</dbReference>
<dbReference type="RefSeq" id="WP_027480149.1">
    <property type="nucleotide sequence ID" value="NC_001264.1"/>
</dbReference>
<dbReference type="SMR" id="Q9RYM7"/>
<dbReference type="FunCoup" id="Q9RYM7">
    <property type="interactions" value="19"/>
</dbReference>
<dbReference type="STRING" id="243230.DR_A0284"/>
<dbReference type="PaxDb" id="243230-DR_A0284"/>
<dbReference type="EnsemblBacteria" id="AAF12478">
    <property type="protein sequence ID" value="AAF12478"/>
    <property type="gene ID" value="DR_A0284"/>
</dbReference>
<dbReference type="GeneID" id="69519174"/>
<dbReference type="KEGG" id="dra:DR_A0284"/>
<dbReference type="PATRIC" id="fig|243230.17.peg.3175"/>
<dbReference type="eggNOG" id="COG1540">
    <property type="taxonomic scope" value="Bacteria"/>
</dbReference>
<dbReference type="HOGENOM" id="CLU_069535_0_0_0"/>
<dbReference type="InParanoid" id="Q9RYM7"/>
<dbReference type="OrthoDB" id="9773478at2"/>
<dbReference type="Proteomes" id="UP000002524">
    <property type="component" value="Chromosome 2"/>
</dbReference>
<dbReference type="GO" id="GO:0017168">
    <property type="term" value="F:5-oxoprolinase (ATP-hydrolyzing) activity"/>
    <property type="evidence" value="ECO:0007669"/>
    <property type="project" value="UniProtKB-UniRule"/>
</dbReference>
<dbReference type="GO" id="GO:0005524">
    <property type="term" value="F:ATP binding"/>
    <property type="evidence" value="ECO:0007669"/>
    <property type="project" value="UniProtKB-UniRule"/>
</dbReference>
<dbReference type="GO" id="GO:0005975">
    <property type="term" value="P:carbohydrate metabolic process"/>
    <property type="evidence" value="ECO:0007669"/>
    <property type="project" value="InterPro"/>
</dbReference>
<dbReference type="CDD" id="cd10787">
    <property type="entry name" value="LamB_YcsF_like"/>
    <property type="match status" value="1"/>
</dbReference>
<dbReference type="Gene3D" id="3.20.20.370">
    <property type="entry name" value="Glycoside hydrolase/deacetylase"/>
    <property type="match status" value="1"/>
</dbReference>
<dbReference type="HAMAP" id="MF_00691">
    <property type="entry name" value="PxpA"/>
    <property type="match status" value="1"/>
</dbReference>
<dbReference type="InterPro" id="IPR011330">
    <property type="entry name" value="Glyco_hydro/deAcase_b/a-brl"/>
</dbReference>
<dbReference type="InterPro" id="IPR005501">
    <property type="entry name" value="LamB/YcsF/PxpA-like"/>
</dbReference>
<dbReference type="NCBIfam" id="NF003814">
    <property type="entry name" value="PRK05406.1-3"/>
    <property type="match status" value="1"/>
</dbReference>
<dbReference type="NCBIfam" id="NF003816">
    <property type="entry name" value="PRK05406.1-5"/>
    <property type="match status" value="1"/>
</dbReference>
<dbReference type="PANTHER" id="PTHR30292:SF0">
    <property type="entry name" value="5-OXOPROLINASE SUBUNIT A"/>
    <property type="match status" value="1"/>
</dbReference>
<dbReference type="PANTHER" id="PTHR30292">
    <property type="entry name" value="UNCHARACTERIZED PROTEIN YBGL-RELATED"/>
    <property type="match status" value="1"/>
</dbReference>
<dbReference type="Pfam" id="PF03746">
    <property type="entry name" value="LamB_YcsF"/>
    <property type="match status" value="1"/>
</dbReference>
<dbReference type="SUPFAM" id="SSF88713">
    <property type="entry name" value="Glycoside hydrolase/deacetylase"/>
    <property type="match status" value="1"/>
</dbReference>
<protein>
    <recommendedName>
        <fullName evidence="1">5-oxoprolinase subunit A</fullName>
        <shortName evidence="1">5-OPase subunit A</shortName>
        <ecNumber evidence="1">3.5.2.9</ecNumber>
    </recommendedName>
    <alternativeName>
        <fullName evidence="1">5-oxoprolinase (ATP-hydrolyzing) subunit A</fullName>
    </alternativeName>
</protein>
<sequence>MTTTLTTDLNADAGESFGHWPLGDDARLFPLLTSVNLALGFHAGDPVTLHSAVRLARQHGLGIGAHPGYPDLVGFGRRELALTPLEIQAATLYQIGALQAFLTVEGGTLQHVKAHGALYMRIHEDRAAGEAFCHAVQQLVPQAYLIVLAGAAGSDLALTAAAHGLRVRREAFPERAYTGDGRLASRQLPGSSIHDPAEAARRAVGMAQGWVQTLGGERLALEMDTLCIHGDNPQAVAIAGAIRAALAENGVTLARLHD</sequence>
<gene>
    <name evidence="1" type="primary">pxpA</name>
    <name type="ordered locus">DR_A0284</name>
</gene>
<proteinExistence type="inferred from homology"/>
<comment type="function">
    <text evidence="1">Catalyzes the cleavage of 5-oxoproline to form L-glutamate coupled to the hydrolysis of ATP to ADP and inorganic phosphate.</text>
</comment>
<comment type="catalytic activity">
    <reaction evidence="1">
        <text>5-oxo-L-proline + ATP + 2 H2O = L-glutamate + ADP + phosphate + H(+)</text>
        <dbReference type="Rhea" id="RHEA:10348"/>
        <dbReference type="ChEBI" id="CHEBI:15377"/>
        <dbReference type="ChEBI" id="CHEBI:15378"/>
        <dbReference type="ChEBI" id="CHEBI:29985"/>
        <dbReference type="ChEBI" id="CHEBI:30616"/>
        <dbReference type="ChEBI" id="CHEBI:43474"/>
        <dbReference type="ChEBI" id="CHEBI:58402"/>
        <dbReference type="ChEBI" id="CHEBI:456216"/>
        <dbReference type="EC" id="3.5.2.9"/>
    </reaction>
</comment>
<comment type="subunit">
    <text evidence="1">Forms a complex composed of PxpA, PxpB and PxpC.</text>
</comment>
<comment type="similarity">
    <text evidence="1">Belongs to the LamB/PxpA family.</text>
</comment>
<comment type="sequence caution" evidence="2">
    <conflict type="erroneous initiation">
        <sequence resource="EMBL-CDS" id="AAF12478"/>
    </conflict>
</comment>
<keyword id="KW-0067">ATP-binding</keyword>
<keyword id="KW-0378">Hydrolase</keyword>
<keyword id="KW-0547">Nucleotide-binding</keyword>
<keyword id="KW-1185">Reference proteome</keyword>
<accession>Q9RYM7</accession>